<feature type="chain" id="PRO_0000203446" description="N-glycosylation protein EOS1">
    <location>
        <begin position="1"/>
        <end position="366"/>
    </location>
</feature>
<feature type="topological domain" description="Lumenal" evidence="1">
    <location>
        <begin position="1"/>
        <end position="136"/>
    </location>
</feature>
<feature type="transmembrane region" description="Helical" evidence="1">
    <location>
        <begin position="137"/>
        <end position="157"/>
    </location>
</feature>
<feature type="topological domain" description="Cytoplasmic" evidence="1">
    <location>
        <begin position="158"/>
        <end position="167"/>
    </location>
</feature>
<feature type="transmembrane region" description="Helical" evidence="1">
    <location>
        <begin position="168"/>
        <end position="188"/>
    </location>
</feature>
<feature type="topological domain" description="Lumenal" evidence="1">
    <location>
        <begin position="189"/>
        <end position="195"/>
    </location>
</feature>
<feature type="transmembrane region" description="Helical" evidence="1">
    <location>
        <begin position="196"/>
        <end position="216"/>
    </location>
</feature>
<feature type="topological domain" description="Cytoplasmic" evidence="1">
    <location>
        <begin position="217"/>
        <end position="321"/>
    </location>
</feature>
<feature type="transmembrane region" description="Helical" evidence="1">
    <location>
        <begin position="322"/>
        <end position="342"/>
    </location>
</feature>
<feature type="topological domain" description="Lumenal" evidence="1">
    <location>
        <begin position="343"/>
        <end position="366"/>
    </location>
</feature>
<feature type="region of interest" description="Disordered" evidence="2">
    <location>
        <begin position="233"/>
        <end position="305"/>
    </location>
</feature>
<feature type="compositionally biased region" description="Acidic residues" evidence="2">
    <location>
        <begin position="233"/>
        <end position="256"/>
    </location>
</feature>
<feature type="compositionally biased region" description="Low complexity" evidence="2">
    <location>
        <begin position="272"/>
        <end position="284"/>
    </location>
</feature>
<feature type="glycosylation site" description="N-linked (GlcNAc...) asparagine" evidence="1">
    <location>
        <position position="103"/>
    </location>
</feature>
<feature type="glycosylation site" description="N-linked (GlcNAc...) asparagine" evidence="1">
    <location>
        <position position="104"/>
    </location>
</feature>
<gene>
    <name type="primary">EOS1</name>
    <name type="ordered locus">YNL080C</name>
    <name type="ORF">N2327</name>
</gene>
<sequence>MTWILSTGMGPHEDKYAKHERATFKKTYSSMKTLSLNHLTAKQHMLMALCRDISLLPPLTYIFTSLRKAWRVSMRTSITLYEPQSLRDAFTYFWQKLNSAYDNNSSFEGASQKAVNGDGKDSLLLSALTTARASEYLLCSLWCLVSLYLSYAILDSLMVRWIVKYSTVAAILRMFSMSLIIVTLELLLLSSLSPELDYFLHTWILISCVLTAVYIWQSYLTSDLRYIRNQEGEVQEDTNVPEETEDYEDGEDDADEDSHVVVADESTVDVPSNDSLSDNSDGGLFPVNRPSVSHSQSPKRPKKYPKKAFNFTTKRTIDLYKITVLCVVPVGLASFITMLGLLRNLFIQRLDVEQLERILHEMHPPA</sequence>
<keyword id="KW-0256">Endoplasmic reticulum</keyword>
<keyword id="KW-0325">Glycoprotein</keyword>
<keyword id="KW-0472">Membrane</keyword>
<keyword id="KW-1185">Reference proteome</keyword>
<keyword id="KW-0812">Transmembrane</keyword>
<keyword id="KW-1133">Transmembrane helix</keyword>
<dbReference type="EMBL" id="DQ115393">
    <property type="protein sequence ID" value="AAZ22528.1"/>
    <property type="molecule type" value="Genomic_DNA"/>
</dbReference>
<dbReference type="EMBL" id="X86470">
    <property type="protein sequence ID" value="CAA60178.1"/>
    <property type="molecule type" value="Genomic_DNA"/>
</dbReference>
<dbReference type="EMBL" id="Z71356">
    <property type="protein sequence ID" value="CAA95954.1"/>
    <property type="molecule type" value="Genomic_DNA"/>
</dbReference>
<dbReference type="EMBL" id="BK006947">
    <property type="protein sequence ID" value="DAA10465.1"/>
    <property type="molecule type" value="Genomic_DNA"/>
</dbReference>
<dbReference type="PIR" id="S53898">
    <property type="entry name" value="S53898"/>
</dbReference>
<dbReference type="RefSeq" id="NP_014319.1">
    <property type="nucleotide sequence ID" value="NM_001182918.1"/>
</dbReference>
<dbReference type="BioGRID" id="35743">
    <property type="interactions" value="748"/>
</dbReference>
<dbReference type="FunCoup" id="P53938">
    <property type="interactions" value="34"/>
</dbReference>
<dbReference type="IntAct" id="P53938">
    <property type="interactions" value="1"/>
</dbReference>
<dbReference type="STRING" id="4932.YNL080C"/>
<dbReference type="GlyCosmos" id="P53938">
    <property type="glycosylation" value="2 sites, No reported glycans"/>
</dbReference>
<dbReference type="GlyGen" id="P53938">
    <property type="glycosylation" value="2 sites"/>
</dbReference>
<dbReference type="iPTMnet" id="P53938"/>
<dbReference type="PaxDb" id="4932-YNL080C"/>
<dbReference type="PeptideAtlas" id="P53938"/>
<dbReference type="EnsemblFungi" id="YNL080C_mRNA">
    <property type="protein sequence ID" value="YNL080C"/>
    <property type="gene ID" value="YNL080C"/>
</dbReference>
<dbReference type="GeneID" id="855644"/>
<dbReference type="KEGG" id="sce:YNL080C"/>
<dbReference type="AGR" id="SGD:S000005024"/>
<dbReference type="SGD" id="S000005024">
    <property type="gene designation" value="EOS1"/>
</dbReference>
<dbReference type="VEuPathDB" id="FungiDB:YNL080C"/>
<dbReference type="eggNOG" id="ENOG502QTWB">
    <property type="taxonomic scope" value="Eukaryota"/>
</dbReference>
<dbReference type="HOGENOM" id="CLU_043059_2_0_1"/>
<dbReference type="InParanoid" id="P53938"/>
<dbReference type="OMA" id="SLMIRWI"/>
<dbReference type="OrthoDB" id="2139606at2759"/>
<dbReference type="BioCyc" id="YEAST:G3O-33109-MONOMER"/>
<dbReference type="BioGRID-ORCS" id="855644">
    <property type="hits" value="8 hits in 10 CRISPR screens"/>
</dbReference>
<dbReference type="PRO" id="PR:P53938"/>
<dbReference type="Proteomes" id="UP000002311">
    <property type="component" value="Chromosome XIV"/>
</dbReference>
<dbReference type="RNAct" id="P53938">
    <property type="molecule type" value="protein"/>
</dbReference>
<dbReference type="GO" id="GO:0005783">
    <property type="term" value="C:endoplasmic reticulum"/>
    <property type="evidence" value="ECO:0007005"/>
    <property type="project" value="SGD"/>
</dbReference>
<dbReference type="GO" id="GO:0005789">
    <property type="term" value="C:endoplasmic reticulum membrane"/>
    <property type="evidence" value="ECO:0000314"/>
    <property type="project" value="SGD"/>
</dbReference>
<dbReference type="GO" id="GO:0034599">
    <property type="term" value="P:cellular response to oxidative stress"/>
    <property type="evidence" value="ECO:0000315"/>
    <property type="project" value="SGD"/>
</dbReference>
<dbReference type="GO" id="GO:0006487">
    <property type="term" value="P:protein N-linked glycosylation"/>
    <property type="evidence" value="ECO:0000315"/>
    <property type="project" value="SGD"/>
</dbReference>
<dbReference type="InterPro" id="IPR021100">
    <property type="entry name" value="N-glycosylation_EOS1"/>
</dbReference>
<dbReference type="PANTHER" id="PTHR28147">
    <property type="entry name" value="N-GLYCOSYLATION PROTEIN EOS1"/>
    <property type="match status" value="1"/>
</dbReference>
<dbReference type="PANTHER" id="PTHR28147:SF1">
    <property type="entry name" value="N-GLYCOSYLATION PROTEIN EOS1"/>
    <property type="match status" value="1"/>
</dbReference>
<dbReference type="Pfam" id="PF12326">
    <property type="entry name" value="EOS1"/>
    <property type="match status" value="1"/>
</dbReference>
<dbReference type="PRINTS" id="PR02070">
    <property type="entry name" value="NGLYCOSEOS1"/>
</dbReference>
<evidence type="ECO:0000255" key="1"/>
<evidence type="ECO:0000256" key="2">
    <source>
        <dbReference type="SAM" id="MobiDB-lite"/>
    </source>
</evidence>
<evidence type="ECO:0000269" key="3">
    <source>
    </source>
</evidence>
<evidence type="ECO:0000269" key="4">
    <source>
    </source>
</evidence>
<evidence type="ECO:0000269" key="5">
    <source>
    </source>
</evidence>
<evidence type="ECO:0000269" key="6">
    <source>
    </source>
</evidence>
<evidence type="ECO:0000305" key="7"/>
<reference key="1">
    <citation type="journal article" date="2005" name="Nat. Genet.">
        <title>Quantitative trait loci mapped to single-nucleotide resolution in yeast.</title>
        <authorList>
            <person name="Deutschbauer A.M."/>
            <person name="Davis R.W."/>
        </authorList>
    </citation>
    <scope>NUCLEOTIDE SEQUENCE [GENOMIC DNA]</scope>
    <source>
        <strain>SK1</strain>
    </source>
</reference>
<reference key="2">
    <citation type="journal article" date="1996" name="Yeast">
        <title>Sequencing a cosmid clone of Saccharomyces cerevisiae chromosome XIV reveals 12 new open reading frames (ORFs) and an ancient duplication of six ORFs.</title>
        <authorList>
            <person name="Poehlmann R."/>
            <person name="Philippsen P."/>
        </authorList>
    </citation>
    <scope>NUCLEOTIDE SEQUENCE [GENOMIC DNA]</scope>
    <source>
        <strain>ATCC 96604 / S288c / FY1679</strain>
    </source>
</reference>
<reference key="3">
    <citation type="journal article" date="1997" name="Nature">
        <title>The nucleotide sequence of Saccharomyces cerevisiae chromosome XIV and its evolutionary implications.</title>
        <authorList>
            <person name="Philippsen P."/>
            <person name="Kleine K."/>
            <person name="Poehlmann R."/>
            <person name="Duesterhoeft A."/>
            <person name="Hamberg K."/>
            <person name="Hegemann J.H."/>
            <person name="Obermaier B."/>
            <person name="Urrestarazu L.A."/>
            <person name="Aert R."/>
            <person name="Albermann K."/>
            <person name="Altmann R."/>
            <person name="Andre B."/>
            <person name="Baladron V."/>
            <person name="Ballesta J.P.G."/>
            <person name="Becam A.-M."/>
            <person name="Beinhauer J.D."/>
            <person name="Boskovic J."/>
            <person name="Buitrago M.J."/>
            <person name="Bussereau F."/>
            <person name="Coster F."/>
            <person name="Crouzet M."/>
            <person name="D'Angelo M."/>
            <person name="Dal Pero F."/>
            <person name="De Antoni A."/>
            <person name="del Rey F."/>
            <person name="Doignon F."/>
            <person name="Domdey H."/>
            <person name="Dubois E."/>
            <person name="Fiedler T.A."/>
            <person name="Fleig U."/>
            <person name="Floeth M."/>
            <person name="Fritz C."/>
            <person name="Gaillardin C."/>
            <person name="Garcia-Cantalejo J.M."/>
            <person name="Glansdorff N."/>
            <person name="Goffeau A."/>
            <person name="Gueldener U."/>
            <person name="Herbert C.J."/>
            <person name="Heumann K."/>
            <person name="Heuss-Neitzel D."/>
            <person name="Hilbert H."/>
            <person name="Hinni K."/>
            <person name="Iraqui Houssaini I."/>
            <person name="Jacquet M."/>
            <person name="Jimenez A."/>
            <person name="Jonniaux J.-L."/>
            <person name="Karpfinger-Hartl L."/>
            <person name="Lanfranchi G."/>
            <person name="Lepingle A."/>
            <person name="Levesque H."/>
            <person name="Lyck R."/>
            <person name="Maftahi M."/>
            <person name="Mallet L."/>
            <person name="Maurer C.T.C."/>
            <person name="Messenguy F."/>
            <person name="Mewes H.-W."/>
            <person name="Moestl D."/>
            <person name="Nasr F."/>
            <person name="Nicaud J.-M."/>
            <person name="Niedenthal R.K."/>
            <person name="Pandolfo D."/>
            <person name="Pierard A."/>
            <person name="Piravandi E."/>
            <person name="Planta R.J."/>
            <person name="Pohl T.M."/>
            <person name="Purnelle B."/>
            <person name="Rebischung C."/>
            <person name="Remacha M.A."/>
            <person name="Revuelta J.L."/>
            <person name="Rinke M."/>
            <person name="Saiz J.E."/>
            <person name="Sartorello F."/>
            <person name="Scherens B."/>
            <person name="Sen-Gupta M."/>
            <person name="Soler-Mira A."/>
            <person name="Urbanus J.H.M."/>
            <person name="Valle G."/>
            <person name="Van Dyck L."/>
            <person name="Verhasselt P."/>
            <person name="Vierendeels F."/>
            <person name="Vissers S."/>
            <person name="Voet M."/>
            <person name="Volckaert G."/>
            <person name="Wach A."/>
            <person name="Wambutt R."/>
            <person name="Wedler H."/>
            <person name="Zollner A."/>
            <person name="Hani J."/>
        </authorList>
    </citation>
    <scope>NUCLEOTIDE SEQUENCE [LARGE SCALE GENOMIC DNA]</scope>
    <source>
        <strain>ATCC 204508 / S288c</strain>
    </source>
</reference>
<reference key="4">
    <citation type="journal article" date="2014" name="G3 (Bethesda)">
        <title>The reference genome sequence of Saccharomyces cerevisiae: Then and now.</title>
        <authorList>
            <person name="Engel S.R."/>
            <person name="Dietrich F.S."/>
            <person name="Fisk D.G."/>
            <person name="Binkley G."/>
            <person name="Balakrishnan R."/>
            <person name="Costanzo M.C."/>
            <person name="Dwight S.S."/>
            <person name="Hitz B.C."/>
            <person name="Karra K."/>
            <person name="Nash R.S."/>
            <person name="Weng S."/>
            <person name="Wong E.D."/>
            <person name="Lloyd P."/>
            <person name="Skrzypek M.S."/>
            <person name="Miyasato S.R."/>
            <person name="Simison M."/>
            <person name="Cherry J.M."/>
        </authorList>
    </citation>
    <scope>GENOME REANNOTATION</scope>
    <source>
        <strain>ATCC 204508 / S288c</strain>
    </source>
</reference>
<reference key="5">
    <citation type="journal article" date="2000" name="Yeast">
        <title>Analysis of deletion phenotypes and GFP fusions of 21 novel Saccharomyces cerevisiae open reading frames.</title>
        <authorList>
            <person name="Brachat A."/>
            <person name="Liebundguth N."/>
            <person name="Rebischung C."/>
            <person name="Lemire S."/>
            <person name="Schaerer F."/>
            <person name="Hoepfner D."/>
            <person name="Demchyshyn V."/>
            <person name="Howald I."/>
            <person name="Duesterhoeft A."/>
            <person name="Moestl D."/>
            <person name="Poehlmann R."/>
            <person name="Koetter P."/>
            <person name="Hall M.N."/>
            <person name="Wach A."/>
            <person name="Philippsen P."/>
        </authorList>
    </citation>
    <scope>SUBCELLULAR LOCATION</scope>
</reference>
<reference key="6">
    <citation type="journal article" date="2003" name="Nature">
        <title>Global analysis of protein expression in yeast.</title>
        <authorList>
            <person name="Ghaemmaghami S."/>
            <person name="Huh W.-K."/>
            <person name="Bower K."/>
            <person name="Howson R.W."/>
            <person name="Belle A."/>
            <person name="Dephoure N."/>
            <person name="O'Shea E.K."/>
            <person name="Weissman J.S."/>
        </authorList>
    </citation>
    <scope>LEVEL OF PROTEIN EXPRESSION [LARGE SCALE ANALYSIS]</scope>
</reference>
<reference key="7">
    <citation type="journal article" date="2006" name="Proc. Natl. Acad. Sci. U.S.A.">
        <title>A global topology map of the Saccharomyces cerevisiae membrane proteome.</title>
        <authorList>
            <person name="Kim H."/>
            <person name="Melen K."/>
            <person name="Oesterberg M."/>
            <person name="von Heijne G."/>
        </authorList>
    </citation>
    <scope>TOPOLOGY [LARGE SCALE ANALYSIS]</scope>
    <source>
        <strain>ATCC 208353 / W303-1A</strain>
    </source>
</reference>
<reference key="8">
    <citation type="journal article" date="2007" name="Biochem. Biophys. Res. Commun.">
        <title>EOS1, whose deletion confers sensitivity to oxidative stress, is involved in N-glycosylation in Saccharomyces cerevisiae.</title>
        <authorList>
            <person name="Nakamura T."/>
            <person name="Ando A."/>
            <person name="Takagi H."/>
            <person name="Shima J."/>
        </authorList>
    </citation>
    <scope>FUNCTION</scope>
    <scope>SUBCELLULAR LOCATION</scope>
</reference>
<reference key="9">
    <citation type="journal article" date="2009" name="Mol. Syst. Biol.">
        <title>Global analysis of the glycoproteome in Saccharomyces cerevisiae reveals new roles for protein glycosylation in eukaryotes.</title>
        <authorList>
            <person name="Kung L.A."/>
            <person name="Tao S.-C."/>
            <person name="Qian J."/>
            <person name="Smith M.G."/>
            <person name="Snyder M."/>
            <person name="Zhu H."/>
        </authorList>
    </citation>
    <scope>GLYCOSYLATION [LARGE SCALE ANALYSIS]</scope>
</reference>
<proteinExistence type="evidence at protein level"/>
<organism>
    <name type="scientific">Saccharomyces cerevisiae (strain ATCC 204508 / S288c)</name>
    <name type="common">Baker's yeast</name>
    <dbReference type="NCBI Taxonomy" id="559292"/>
    <lineage>
        <taxon>Eukaryota</taxon>
        <taxon>Fungi</taxon>
        <taxon>Dikarya</taxon>
        <taxon>Ascomycota</taxon>
        <taxon>Saccharomycotina</taxon>
        <taxon>Saccharomycetes</taxon>
        <taxon>Saccharomycetales</taxon>
        <taxon>Saccharomycetaceae</taxon>
        <taxon>Saccharomyces</taxon>
    </lineage>
</organism>
<accession>P53938</accession>
<accession>D6W199</accession>
<accession>Q45TY2</accession>
<name>EOS1_YEAST</name>
<protein>
    <recommendedName>
        <fullName>N-glycosylation protein EOS1</fullName>
    </recommendedName>
    <alternativeName>
        <fullName>ER-localized and oxidants sensitive protein 1</fullName>
    </alternativeName>
</protein>
<comment type="function">
    <text evidence="5">Involved in oxidative stress resistance and N-glycosylation.</text>
</comment>
<comment type="subcellular location">
    <subcellularLocation>
        <location evidence="3 5">Endoplasmic reticulum membrane</location>
        <topology evidence="3 5">Multi-pass membrane protein</topology>
    </subcellularLocation>
</comment>
<comment type="PTM">
    <text evidence="6">N-glycosylated.</text>
</comment>
<comment type="miscellaneous">
    <text evidence="4">Present with 937 molecules/cell in log phase SD medium.</text>
</comment>
<comment type="similarity">
    <text evidence="7">Belongs to the EOS1 family.</text>
</comment>